<organism>
    <name type="scientific">Arabidopsis thaliana</name>
    <name type="common">Mouse-ear cress</name>
    <dbReference type="NCBI Taxonomy" id="3702"/>
    <lineage>
        <taxon>Eukaryota</taxon>
        <taxon>Viridiplantae</taxon>
        <taxon>Streptophyta</taxon>
        <taxon>Embryophyta</taxon>
        <taxon>Tracheophyta</taxon>
        <taxon>Spermatophyta</taxon>
        <taxon>Magnoliopsida</taxon>
        <taxon>eudicotyledons</taxon>
        <taxon>Gunneridae</taxon>
        <taxon>Pentapetalae</taxon>
        <taxon>rosids</taxon>
        <taxon>malvids</taxon>
        <taxon>Brassicales</taxon>
        <taxon>Brassicaceae</taxon>
        <taxon>Camelineae</taxon>
        <taxon>Arabidopsis</taxon>
    </lineage>
</organism>
<proteinExistence type="evidence at protein level"/>
<sequence>MAKLILVFATLALFILLANASIYRTVVEFEEDDDVSNPQQGKCQREFMKHQQLRGCKQWIRKRAQQGRIGYEADDFELTLDVDLEDDENPMGPQQQSSLKMCCNELRQVDKMCVCPTLKKAAQQVRFQGMHGQQQVQHVFQTAKNLPNVCKIPTVGSCQFKASPY</sequence>
<accession>Q9FH31</accession>
<accession>Q41915</accession>
<accession>Q9S8P5</accession>
<keyword id="KW-0903">Direct protein sequencing</keyword>
<keyword id="KW-1015">Disulfide bond</keyword>
<keyword id="KW-1185">Reference proteome</keyword>
<keyword id="KW-0708">Seed storage protein</keyword>
<keyword id="KW-0732">Signal</keyword>
<keyword id="KW-0758">Storage protein</keyword>
<evidence type="ECO:0000250" key="1"/>
<evidence type="ECO:0000255" key="2"/>
<evidence type="ECO:0000269" key="3">
    <source>
    </source>
</evidence>
<evidence type="ECO:0000305" key="4"/>
<name>2SS5_ARATH</name>
<gene>
    <name type="primary">SESA5</name>
    <name type="ordered locus">At5g54740</name>
    <name type="ORF">K5F14.10</name>
</gene>
<dbReference type="EMBL" id="AB022214">
    <property type="protein sequence ID" value="BAB09940.1"/>
    <property type="molecule type" value="Genomic_DNA"/>
</dbReference>
<dbReference type="EMBL" id="CP002688">
    <property type="protein sequence ID" value="AED96532.1"/>
    <property type="molecule type" value="Genomic_DNA"/>
</dbReference>
<dbReference type="EMBL" id="AY065182">
    <property type="protein sequence ID" value="AAL38358.1"/>
    <property type="molecule type" value="mRNA"/>
</dbReference>
<dbReference type="EMBL" id="BT009691">
    <property type="protein sequence ID" value="AAP88301.1"/>
    <property type="molecule type" value="mRNA"/>
</dbReference>
<dbReference type="EMBL" id="Z17669">
    <property type="protein sequence ID" value="CAA79030.1"/>
    <property type="molecule type" value="mRNA"/>
</dbReference>
<dbReference type="PIR" id="JQ2239">
    <property type="entry name" value="JQ2239"/>
</dbReference>
<dbReference type="RefSeq" id="NP_200285.1">
    <property type="nucleotide sequence ID" value="NM_124855.3"/>
</dbReference>
<dbReference type="SMR" id="Q9FH31"/>
<dbReference type="FunCoup" id="Q9FH31">
    <property type="interactions" value="63"/>
</dbReference>
<dbReference type="STRING" id="3702.Q9FH31"/>
<dbReference type="PaxDb" id="3702-AT5G54740.1"/>
<dbReference type="ProteomicsDB" id="244549"/>
<dbReference type="EnsemblPlants" id="AT5G54740.1">
    <property type="protein sequence ID" value="AT5G54740.1"/>
    <property type="gene ID" value="AT5G54740"/>
</dbReference>
<dbReference type="GeneID" id="835563"/>
<dbReference type="Gramene" id="AT5G54740.1">
    <property type="protein sequence ID" value="AT5G54740.1"/>
    <property type="gene ID" value="AT5G54740"/>
</dbReference>
<dbReference type="KEGG" id="ath:AT5G54740"/>
<dbReference type="Araport" id="AT5G54740"/>
<dbReference type="TAIR" id="AT5G54740">
    <property type="gene designation" value="SESA5"/>
</dbReference>
<dbReference type="eggNOG" id="ENOG502S7EV">
    <property type="taxonomic scope" value="Eukaryota"/>
</dbReference>
<dbReference type="HOGENOM" id="CLU_131213_1_0_1"/>
<dbReference type="InParanoid" id="Q9FH31"/>
<dbReference type="OMA" id="KMCVCPT"/>
<dbReference type="OrthoDB" id="1922883at2759"/>
<dbReference type="PhylomeDB" id="Q9FH31"/>
<dbReference type="PRO" id="PR:Q9FH31"/>
<dbReference type="Proteomes" id="UP000006548">
    <property type="component" value="Chromosome 5"/>
</dbReference>
<dbReference type="ExpressionAtlas" id="Q9FH31">
    <property type="expression patterns" value="baseline and differential"/>
</dbReference>
<dbReference type="GO" id="GO:0045735">
    <property type="term" value="F:nutrient reservoir activity"/>
    <property type="evidence" value="ECO:0007669"/>
    <property type="project" value="UniProtKB-KW"/>
</dbReference>
<dbReference type="GO" id="GO:0009555">
    <property type="term" value="P:pollen development"/>
    <property type="evidence" value="ECO:0000315"/>
    <property type="project" value="TAIR"/>
</dbReference>
<dbReference type="CDD" id="cd00261">
    <property type="entry name" value="AAI_SS"/>
    <property type="match status" value="1"/>
</dbReference>
<dbReference type="Gene3D" id="1.10.110.10">
    <property type="entry name" value="Plant lipid-transfer and hydrophobic proteins"/>
    <property type="match status" value="1"/>
</dbReference>
<dbReference type="InterPro" id="IPR036312">
    <property type="entry name" value="Bifun_inhib/LTP/seed_sf"/>
</dbReference>
<dbReference type="InterPro" id="IPR016140">
    <property type="entry name" value="Bifunc_inhib/LTP/seed_store"/>
</dbReference>
<dbReference type="InterPro" id="IPR000617">
    <property type="entry name" value="Napin/2SS/CON"/>
</dbReference>
<dbReference type="PANTHER" id="PTHR35496">
    <property type="entry name" value="2S SEED STORAGE PROTEIN 1-RELATED"/>
    <property type="match status" value="1"/>
</dbReference>
<dbReference type="PANTHER" id="PTHR35496:SF20">
    <property type="entry name" value="2S SEED STORAGE PROTEIN 1-RELATED"/>
    <property type="match status" value="1"/>
</dbReference>
<dbReference type="Pfam" id="PF00234">
    <property type="entry name" value="Tryp_alpha_amyl"/>
    <property type="match status" value="1"/>
</dbReference>
<dbReference type="PRINTS" id="PR00496">
    <property type="entry name" value="NAPIN"/>
</dbReference>
<dbReference type="SMART" id="SM00499">
    <property type="entry name" value="AAI"/>
    <property type="match status" value="1"/>
</dbReference>
<dbReference type="SUPFAM" id="SSF47699">
    <property type="entry name" value="Bifunctional inhibitor/lipid-transfer protein/seed storage 2S albumin"/>
    <property type="match status" value="1"/>
</dbReference>
<feature type="signal peptide" evidence="2">
    <location>
        <begin position="1"/>
        <end position="20"/>
    </location>
</feature>
<feature type="propeptide" id="PRO_0000416589" evidence="1">
    <location>
        <begin position="21"/>
        <end position="37"/>
    </location>
</feature>
<feature type="chain" id="PRO_0000416590" description="2S seed storage protein 5 small subunit" evidence="1">
    <location>
        <begin position="38"/>
        <end position="70"/>
    </location>
</feature>
<feature type="propeptide" id="PRO_0000416591" evidence="3">
    <location>
        <begin position="71"/>
        <end position="89"/>
    </location>
</feature>
<feature type="chain" id="PRO_0000416592" description="2S seed storage protein 5 large subunit" evidence="1">
    <location>
        <begin position="90"/>
        <end position="165"/>
    </location>
</feature>
<feature type="sequence conflict" description="In Ref. 5; AA sequence." evidence="4" ref="5">
    <original>K</original>
    <variation>Q</variation>
    <location>
        <position position="120"/>
    </location>
</feature>
<comment type="function">
    <text>This is a 2S seed storage protein.</text>
</comment>
<comment type="subunit">
    <text>The mature protein consists of a small and a large chain linked by disulfide bonds.</text>
</comment>
<comment type="similarity">
    <text evidence="4">Belongs to the 2S seed storage albumins family.</text>
</comment>
<protein>
    <recommendedName>
        <fullName>2S seed storage protein 5</fullName>
    </recommendedName>
    <alternativeName>
        <fullName>Seed storage albumin 5</fullName>
    </alternativeName>
    <component>
        <recommendedName>
            <fullName>2S seed storage protein 5 small subunit</fullName>
        </recommendedName>
    </component>
    <component>
        <recommendedName>
            <fullName>2S seed storage protein 5 large subunit</fullName>
        </recommendedName>
        <alternativeName>
            <fullName>2S albumin isoform 5 large subunit</fullName>
        </alternativeName>
    </component>
</protein>
<reference key="1">
    <citation type="journal article" date="2000" name="DNA Res.">
        <title>Structural analysis of Arabidopsis thaliana chromosome 5. X. Sequence features of the regions of 3,076,755 bp covered by sixty P1 and TAC clones.</title>
        <authorList>
            <person name="Sato S."/>
            <person name="Nakamura Y."/>
            <person name="Kaneko T."/>
            <person name="Katoh T."/>
            <person name="Asamizu E."/>
            <person name="Kotani H."/>
            <person name="Tabata S."/>
        </authorList>
    </citation>
    <scope>NUCLEOTIDE SEQUENCE [LARGE SCALE GENOMIC DNA]</scope>
    <source>
        <strain>cv. Columbia</strain>
    </source>
</reference>
<reference key="2">
    <citation type="journal article" date="2017" name="Plant J.">
        <title>Araport11: a complete reannotation of the Arabidopsis thaliana reference genome.</title>
        <authorList>
            <person name="Cheng C.Y."/>
            <person name="Krishnakumar V."/>
            <person name="Chan A.P."/>
            <person name="Thibaud-Nissen F."/>
            <person name="Schobel S."/>
            <person name="Town C.D."/>
        </authorList>
    </citation>
    <scope>GENOME REANNOTATION</scope>
    <source>
        <strain>cv. Columbia</strain>
    </source>
</reference>
<reference key="3">
    <citation type="journal article" date="2003" name="Science">
        <title>Empirical analysis of transcriptional activity in the Arabidopsis genome.</title>
        <authorList>
            <person name="Yamada K."/>
            <person name="Lim J."/>
            <person name="Dale J.M."/>
            <person name="Chen H."/>
            <person name="Shinn P."/>
            <person name="Palm C.J."/>
            <person name="Southwick A.M."/>
            <person name="Wu H.C."/>
            <person name="Kim C.J."/>
            <person name="Nguyen M."/>
            <person name="Pham P.K."/>
            <person name="Cheuk R.F."/>
            <person name="Karlin-Newmann G."/>
            <person name="Liu S.X."/>
            <person name="Lam B."/>
            <person name="Sakano H."/>
            <person name="Wu T."/>
            <person name="Yu G."/>
            <person name="Miranda M."/>
            <person name="Quach H.L."/>
            <person name="Tripp M."/>
            <person name="Chang C.H."/>
            <person name="Lee J.M."/>
            <person name="Toriumi M.J."/>
            <person name="Chan M.M."/>
            <person name="Tang C.C."/>
            <person name="Onodera C.S."/>
            <person name="Deng J.M."/>
            <person name="Akiyama K."/>
            <person name="Ansari Y."/>
            <person name="Arakawa T."/>
            <person name="Banh J."/>
            <person name="Banno F."/>
            <person name="Bowser L."/>
            <person name="Brooks S.Y."/>
            <person name="Carninci P."/>
            <person name="Chao Q."/>
            <person name="Choy N."/>
            <person name="Enju A."/>
            <person name="Goldsmith A.D."/>
            <person name="Gurjal M."/>
            <person name="Hansen N.F."/>
            <person name="Hayashizaki Y."/>
            <person name="Johnson-Hopson C."/>
            <person name="Hsuan V.W."/>
            <person name="Iida K."/>
            <person name="Karnes M."/>
            <person name="Khan S."/>
            <person name="Koesema E."/>
            <person name="Ishida J."/>
            <person name="Jiang P.X."/>
            <person name="Jones T."/>
            <person name="Kawai J."/>
            <person name="Kamiya A."/>
            <person name="Meyers C."/>
            <person name="Nakajima M."/>
            <person name="Narusaka M."/>
            <person name="Seki M."/>
            <person name="Sakurai T."/>
            <person name="Satou M."/>
            <person name="Tamse R."/>
            <person name="Vaysberg M."/>
            <person name="Wallender E.K."/>
            <person name="Wong C."/>
            <person name="Yamamura Y."/>
            <person name="Yuan S."/>
            <person name="Shinozaki K."/>
            <person name="Davis R.W."/>
            <person name="Theologis A."/>
            <person name="Ecker J.R."/>
        </authorList>
    </citation>
    <scope>NUCLEOTIDE SEQUENCE [LARGE SCALE MRNA]</scope>
    <source>
        <strain>cv. Columbia</strain>
    </source>
</reference>
<reference key="4">
    <citation type="submission" date="1992-11" db="EMBL/GenBank/DDBJ databases">
        <title>The Arabidopsis thaliana transcribed genome: the GDR cDNA program.</title>
        <authorList>
            <person name="Raynal M."/>
            <person name="Grellet F."/>
            <person name="Laudie M."/>
            <person name="Meyer Y."/>
            <person name="Cooke R."/>
            <person name="Delseny M."/>
        </authorList>
    </citation>
    <scope>NUCLEOTIDE SEQUENCE [LARGE SCALE MRNA] OF 9-98</scope>
    <source>
        <strain>cv. Columbia</strain>
        <tissue>Green siliques</tissue>
    </source>
</reference>
<reference key="5">
    <citation type="journal article" date="1993" name="Plant Physiol.">
        <title>A fifth 2S albumin isoform is present in Arabidopsis thaliana.</title>
        <authorList>
            <person name="van der Klei H."/>
            <person name="Van Damme J."/>
            <person name="Casteels P."/>
            <person name="Krebbers E."/>
        </authorList>
    </citation>
    <scope>PROTEIN SEQUENCE OF 90-120</scope>
</reference>